<dbReference type="EC" id="2.3.1.-" evidence="10"/>
<dbReference type="EMBL" id="AJ011964">
    <property type="protein sequence ID" value="CAB39315.1"/>
    <property type="molecule type" value="Genomic_DNA"/>
</dbReference>
<dbReference type="SMR" id="O94205"/>
<dbReference type="VEuPathDB" id="FungiDB:CPUR_04074"/>
<dbReference type="BioCyc" id="MetaCyc:MONOMER-15623"/>
<dbReference type="UniPathway" id="UPA00327"/>
<dbReference type="GO" id="GO:0005737">
    <property type="term" value="C:cytoplasm"/>
    <property type="evidence" value="ECO:0007669"/>
    <property type="project" value="TreeGrafter"/>
</dbReference>
<dbReference type="GO" id="GO:0016874">
    <property type="term" value="F:ligase activity"/>
    <property type="evidence" value="ECO:0007669"/>
    <property type="project" value="UniProtKB-KW"/>
</dbReference>
<dbReference type="GO" id="GO:0031177">
    <property type="term" value="F:phosphopantetheine binding"/>
    <property type="evidence" value="ECO:0007669"/>
    <property type="project" value="InterPro"/>
</dbReference>
<dbReference type="GO" id="GO:0016740">
    <property type="term" value="F:transferase activity"/>
    <property type="evidence" value="ECO:0007669"/>
    <property type="project" value="UniProtKB-KW"/>
</dbReference>
<dbReference type="GO" id="GO:0043041">
    <property type="term" value="P:amino acid activation for nonribosomal peptide biosynthetic process"/>
    <property type="evidence" value="ECO:0007669"/>
    <property type="project" value="TreeGrafter"/>
</dbReference>
<dbReference type="GO" id="GO:0035835">
    <property type="term" value="P:indole alkaloid biosynthetic process"/>
    <property type="evidence" value="ECO:0007669"/>
    <property type="project" value="UniProtKB-UniPathway"/>
</dbReference>
<dbReference type="CDD" id="cd05918">
    <property type="entry name" value="A_NRPS_SidN3_like"/>
    <property type="match status" value="3"/>
</dbReference>
<dbReference type="CDD" id="cd19542">
    <property type="entry name" value="CT_NRPS-like"/>
    <property type="match status" value="1"/>
</dbReference>
<dbReference type="CDD" id="cd19545">
    <property type="entry name" value="FUM14_C_NRPS-like"/>
    <property type="match status" value="1"/>
</dbReference>
<dbReference type="FunFam" id="3.30.300.30:FF:000015">
    <property type="entry name" value="Nonribosomal peptide synthase SidD"/>
    <property type="match status" value="3"/>
</dbReference>
<dbReference type="FunFam" id="1.10.1200.10:FF:000005">
    <property type="entry name" value="Nonribosomal peptide synthetase 1"/>
    <property type="match status" value="1"/>
</dbReference>
<dbReference type="FunFam" id="3.40.50.12780:FF:000014">
    <property type="entry name" value="Nonribosomal peptide synthetase 1"/>
    <property type="match status" value="1"/>
</dbReference>
<dbReference type="Gene3D" id="3.30.300.30">
    <property type="match status" value="3"/>
</dbReference>
<dbReference type="Gene3D" id="1.10.1200.10">
    <property type="entry name" value="ACP-like"/>
    <property type="match status" value="3"/>
</dbReference>
<dbReference type="Gene3D" id="3.30.559.10">
    <property type="entry name" value="Chloramphenicol acetyltransferase-like domain"/>
    <property type="match status" value="3"/>
</dbReference>
<dbReference type="Gene3D" id="3.40.50.12780">
    <property type="entry name" value="N-terminal domain of ligase-like"/>
    <property type="match status" value="3"/>
</dbReference>
<dbReference type="Gene3D" id="3.30.559.30">
    <property type="entry name" value="Nonribosomal peptide synthetase, condensation domain"/>
    <property type="match status" value="3"/>
</dbReference>
<dbReference type="InterPro" id="IPR010071">
    <property type="entry name" value="AA_adenyl_dom"/>
</dbReference>
<dbReference type="InterPro" id="IPR036736">
    <property type="entry name" value="ACP-like_sf"/>
</dbReference>
<dbReference type="InterPro" id="IPR045851">
    <property type="entry name" value="AMP-bd_C_sf"/>
</dbReference>
<dbReference type="InterPro" id="IPR020845">
    <property type="entry name" value="AMP-binding_CS"/>
</dbReference>
<dbReference type="InterPro" id="IPR000873">
    <property type="entry name" value="AMP-dep_synth/lig_dom"/>
</dbReference>
<dbReference type="InterPro" id="IPR042099">
    <property type="entry name" value="ANL_N_sf"/>
</dbReference>
<dbReference type="InterPro" id="IPR023213">
    <property type="entry name" value="CAT-like_dom_sf"/>
</dbReference>
<dbReference type="InterPro" id="IPR001242">
    <property type="entry name" value="Condensatn"/>
</dbReference>
<dbReference type="InterPro" id="IPR020806">
    <property type="entry name" value="PKS_PP-bd"/>
</dbReference>
<dbReference type="InterPro" id="IPR009081">
    <property type="entry name" value="PP-bd_ACP"/>
</dbReference>
<dbReference type="InterPro" id="IPR006162">
    <property type="entry name" value="Ppantetheine_attach_site"/>
</dbReference>
<dbReference type="NCBIfam" id="TIGR01733">
    <property type="entry name" value="AA-adenyl-dom"/>
    <property type="match status" value="1"/>
</dbReference>
<dbReference type="NCBIfam" id="NF003417">
    <property type="entry name" value="PRK04813.1"/>
    <property type="match status" value="3"/>
</dbReference>
<dbReference type="PANTHER" id="PTHR45527:SF16">
    <property type="entry name" value="NONRIBOSOMAL PEPTIDE SYNTHASE ATNA-RELATED"/>
    <property type="match status" value="1"/>
</dbReference>
<dbReference type="PANTHER" id="PTHR45527">
    <property type="entry name" value="NONRIBOSOMAL PEPTIDE SYNTHETASE"/>
    <property type="match status" value="1"/>
</dbReference>
<dbReference type="Pfam" id="PF00501">
    <property type="entry name" value="AMP-binding"/>
    <property type="match status" value="3"/>
</dbReference>
<dbReference type="Pfam" id="PF00668">
    <property type="entry name" value="Condensation"/>
    <property type="match status" value="3"/>
</dbReference>
<dbReference type="Pfam" id="PF00550">
    <property type="entry name" value="PP-binding"/>
    <property type="match status" value="3"/>
</dbReference>
<dbReference type="SMART" id="SM00823">
    <property type="entry name" value="PKS_PP"/>
    <property type="match status" value="3"/>
</dbReference>
<dbReference type="SUPFAM" id="SSF56801">
    <property type="entry name" value="Acetyl-CoA synthetase-like"/>
    <property type="match status" value="3"/>
</dbReference>
<dbReference type="SUPFAM" id="SSF47336">
    <property type="entry name" value="ACP-like"/>
    <property type="match status" value="3"/>
</dbReference>
<dbReference type="SUPFAM" id="SSF52777">
    <property type="entry name" value="CoA-dependent acyltransferases"/>
    <property type="match status" value="6"/>
</dbReference>
<dbReference type="PROSITE" id="PS00455">
    <property type="entry name" value="AMP_BINDING"/>
    <property type="match status" value="2"/>
</dbReference>
<dbReference type="PROSITE" id="PS50075">
    <property type="entry name" value="CARRIER"/>
    <property type="match status" value="3"/>
</dbReference>
<dbReference type="PROSITE" id="PS00012">
    <property type="entry name" value="PHOSPHOPANTETHEINE"/>
    <property type="match status" value="2"/>
</dbReference>
<gene>
    <name evidence="17" type="primary">lpsA1</name>
    <name evidence="16" type="synonym">cpps1</name>
</gene>
<feature type="chain" id="PRO_0000439105" description="D-lysergyl-peptide-synthetase subunit 1">
    <location>
        <begin position="1"/>
        <end position="3232"/>
    </location>
</feature>
<feature type="domain" description="Carrier 1" evidence="3 21">
    <location>
        <begin position="617"/>
        <end position="686"/>
    </location>
</feature>
<feature type="domain" description="Carrier 2" evidence="3 21">
    <location>
        <begin position="1717"/>
        <end position="1785"/>
    </location>
</feature>
<feature type="domain" description="Carrier 3" evidence="3 21">
    <location>
        <begin position="2810"/>
        <end position="2878"/>
    </location>
</feature>
<feature type="region of interest" description="Adenylation (A) domain 1" evidence="2 21">
    <location>
        <begin position="90"/>
        <end position="474"/>
    </location>
</feature>
<feature type="region of interest" description="Condensation (C) domain 1" evidence="2 21">
    <location>
        <begin position="731"/>
        <end position="1122"/>
    </location>
</feature>
<feature type="region of interest" description="Adenylation (A) domain 2" evidence="2 21">
    <location>
        <begin position="1165"/>
        <end position="1572"/>
    </location>
</feature>
<feature type="region of interest" description="Condensation (C) domain 2" evidence="2 21">
    <location>
        <begin position="1835"/>
        <end position="2252"/>
    </location>
</feature>
<feature type="region of interest" description="Adenylation (A) domain 3" evidence="2 21">
    <location>
        <begin position="2276"/>
        <end position="2675"/>
    </location>
</feature>
<feature type="region of interest" description="Cyclization (Cyc) domain" evidence="2 21">
    <location>
        <begin position="2943"/>
        <end position="3218"/>
    </location>
</feature>
<feature type="modified residue" description="O-(pantetheine 4'-phosphoryl)serine" evidence="3">
    <location>
        <position position="649"/>
    </location>
</feature>
<feature type="modified residue" description="O-(pantetheine 4'-phosphoryl)serine" evidence="3">
    <location>
        <position position="1749"/>
    </location>
</feature>
<feature type="modified residue" description="O-(pantetheine 4'-phosphoryl)serine" evidence="3">
    <location>
        <position position="2842"/>
    </location>
</feature>
<evidence type="ECO:0000250" key="1">
    <source>
        <dbReference type="UniProtKB" id="Q50EL0"/>
    </source>
</evidence>
<evidence type="ECO:0000255" key="2"/>
<evidence type="ECO:0000255" key="3">
    <source>
        <dbReference type="PROSITE-ProRule" id="PRU00258"/>
    </source>
</evidence>
<evidence type="ECO:0000269" key="4">
    <source>
    </source>
</evidence>
<evidence type="ECO:0000269" key="5">
    <source>
    </source>
</evidence>
<evidence type="ECO:0000269" key="6">
    <source>
    </source>
</evidence>
<evidence type="ECO:0000269" key="7">
    <source>
    </source>
</evidence>
<evidence type="ECO:0000269" key="8">
    <source>
    </source>
</evidence>
<evidence type="ECO:0000269" key="9">
    <source>
    </source>
</evidence>
<evidence type="ECO:0000269" key="10">
    <source>
    </source>
</evidence>
<evidence type="ECO:0000269" key="11">
    <source>
    </source>
</evidence>
<evidence type="ECO:0000269" key="12">
    <source>
    </source>
</evidence>
<evidence type="ECO:0000269" key="13">
    <source>
    </source>
</evidence>
<evidence type="ECO:0000269" key="14">
    <source>
    </source>
</evidence>
<evidence type="ECO:0000269" key="15">
    <source>
    </source>
</evidence>
<evidence type="ECO:0000303" key="16">
    <source>
    </source>
</evidence>
<evidence type="ECO:0000303" key="17">
    <source>
    </source>
</evidence>
<evidence type="ECO:0000305" key="18"/>
<evidence type="ECO:0000305" key="19">
    <source>
    </source>
</evidence>
<evidence type="ECO:0000305" key="20">
    <source>
    </source>
</evidence>
<evidence type="ECO:0000305" key="21">
    <source>
    </source>
</evidence>
<proteinExistence type="evidence at protein level"/>
<reference key="1">
    <citation type="journal article" date="1999" name="Mol. Gen. Genet.">
        <title>Evidence for an ergot alkaloid gene cluster in Claviceps purpurea.</title>
        <authorList>
            <person name="Tudzynski P."/>
            <person name="Hoelter K."/>
            <person name="Correia T.H."/>
            <person name="Arntz C."/>
            <person name="Grammel N."/>
            <person name="Keller U."/>
        </authorList>
    </citation>
    <scope>NUCLEOTIDE SEQUENCE [GENOMIC DNA]</scope>
    <scope>IDENTIFICATION IN THE EAS CLUSTER</scope>
    <scope>FUNCTION</scope>
    <source>
        <strain>P1 / 1029/N5</strain>
    </source>
</reference>
<reference key="2">
    <citation type="journal article" date="2001" name="Appl. Microbiol. Biotechnol.">
        <title>Biotechnology and genetics of ergot alkaloids.</title>
        <authorList>
            <person name="Tudzynski P."/>
            <person name="Correia T."/>
            <person name="Keller U."/>
        </authorList>
    </citation>
    <scope>BIOTECHNOLOGY</scope>
    <source>
        <strain>P1 / 1029/N5</strain>
    </source>
</reference>
<reference key="3">
    <citation type="journal article" date="2003" name="Chem. Biol.">
        <title>Molecular cloning and analysis of the ergopeptine assembly system in the ergot fungus Claviceps purpurea.</title>
        <authorList>
            <person name="Correia T."/>
            <person name="Grammel N."/>
            <person name="Ortel I."/>
            <person name="Keller U."/>
            <person name="Tudzynski P."/>
        </authorList>
    </citation>
    <scope>FUNCTION</scope>
    <scope>DOMAIN</scope>
</reference>
<reference key="4">
    <citation type="journal article" date="2004" name="Fungal Genet. Biol.">
        <title>The determinant step in ergot alkaloid biosynthesis by an endophyte of perennial ryegrass.</title>
        <authorList>
            <person name="Wang J."/>
            <person name="Machado C."/>
            <person name="Panaccione D.G."/>
            <person name="Tsai H.-F."/>
            <person name="Schardl C.L."/>
        </authorList>
    </citation>
    <scope>FUNCTION</scope>
    <source>
        <strain>ATCC 20102 / Farmitalia FI 32/17</strain>
    </source>
</reference>
<reference key="5">
    <citation type="journal article" date="2005" name="Phytochemistry">
        <title>The ergot alkaloid gene cluster in Claviceps purpurea: extension of the cluster sequence and intra species evolution.</title>
        <authorList>
            <person name="Haarmann T."/>
            <person name="Machado C."/>
            <person name="Lubbe Y."/>
            <person name="Correia T."/>
            <person name="Schardl C.L."/>
            <person name="Panaccione D.G."/>
            <person name="Tudzynski P."/>
        </authorList>
    </citation>
    <scope>IDENTIFICATION IN THE EAS CLUSTER</scope>
    <scope>FUNCTION</scope>
    <scope>DOMAIN</scope>
</reference>
<reference key="6">
    <citation type="journal article" date="2006" name="ChemBioChem">
        <title>Identification of the cytochrome P450 monooxygenase that bridges the clavine and ergoline alkaloid pathways.</title>
        <authorList>
            <person name="Haarmann T."/>
            <person name="Ortel I."/>
            <person name="Tudzynski P."/>
            <person name="Keller U."/>
        </authorList>
    </citation>
    <scope>FUNCTION</scope>
    <source>
        <strain>P1 / 1029/N5</strain>
    </source>
</reference>
<reference key="7">
    <citation type="journal article" date="2007" name="Appl. Environ. Microbiol.">
        <title>A complex ergovaline gene cluster in epichloe endophytes of grasses.</title>
        <authorList>
            <person name="Fleetwood D.J."/>
            <person name="Scott B."/>
            <person name="Lane G.A."/>
            <person name="Tanaka A."/>
            <person name="Johnson R.D."/>
        </authorList>
    </citation>
    <scope>FUNCTION</scope>
</reference>
<reference key="8">
    <citation type="journal article" date="2007" name="Appl. Environ. Microbiol.">
        <title>Comparison of ergot alkaloid biosynthesis gene clusters in Claviceps species indicates loss of late pathway steps in evolution of C. fusiformis.</title>
        <authorList>
            <person name="Lorenz N."/>
            <person name="Wilson E.V."/>
            <person name="Machado C."/>
            <person name="Schardl C.L."/>
            <person name="Tudzynski P."/>
        </authorList>
    </citation>
    <scope>FUNCTION</scope>
</reference>
<reference key="9">
    <citation type="journal article" date="2008" name="Fungal Genet. Biol.">
        <title>Use of a nonhomologous end joining deficient strain (Deltaku70) of the ergot fungus Claviceps purpurea for identification of a nonribosomal peptide synthetase gene involved in ergotamine biosynthesis.</title>
        <authorList>
            <person name="Haarmann T."/>
            <person name="Lorenz N."/>
            <person name="Tudzynski P."/>
        </authorList>
    </citation>
    <scope>FUNCTION</scope>
    <scope>DISRUPTION PHENOTYPE</scope>
</reference>
<reference key="10">
    <citation type="journal article" date="2009" name="J. Biol. Chem.">
        <title>Combinatorial assembly of simple and complex D-lysergic acid alkaloid peptide classes in the ergot fungus Claviceps purpurea.</title>
        <authorList>
            <person name="Ortel I."/>
            <person name="Keller U."/>
        </authorList>
    </citation>
    <scope>FUNCTION</scope>
    <scope>DOMAIN</scope>
    <scope>CATALYTIC ACTIVITY</scope>
    <scope>PATHWAY</scope>
</reference>
<reference key="11">
    <citation type="journal article" date="2010" name="Appl. Environ. Microbiol.">
        <title>Alkaloid cluster gene ccsA of the ergot fungus Claviceps purpurea encodes chanoclavine I synthase, a flavin adenine dinucleotide-containing oxidoreductase mediating the transformation of N-methyl-dimethylallyltryptophan to chanoclavine I.</title>
        <authorList>
            <person name="Lorenz N."/>
            <person name="Olsovska J."/>
            <person name="Sulc M."/>
            <person name="Tudzynski P."/>
        </authorList>
    </citation>
    <scope>FUNCTION</scope>
</reference>
<reference key="12">
    <citation type="journal article" date="2010" name="J. Am. Chem. Soc.">
        <title>Controlling a structural branch point in ergot alkaloid biosynthesis.</title>
        <authorList>
            <person name="Cheng J.Z."/>
            <person name="Coyle C.M."/>
            <person name="Panaccione D.G."/>
            <person name="O'Connor S.E."/>
        </authorList>
    </citation>
    <scope>FUNCTION</scope>
    <source>
        <strain>ATCC 20102 / Farmitalia FI 32/17</strain>
    </source>
</reference>
<reference key="13">
    <citation type="journal article" date="2011" name="Curr. Genet.">
        <title>Ergot cluster-encoded catalase is required for synthesis of chanoclavine-I in Aspergillus fumigatus.</title>
        <authorList>
            <person name="Goetz K.E."/>
            <person name="Coyle C.M."/>
            <person name="Cheng J.Z."/>
            <person name="O'Connor S.E."/>
            <person name="Panaccione D.G."/>
        </authorList>
    </citation>
    <scope>FUNCTION</scope>
</reference>
<reference key="14">
    <citation type="journal article" date="2011" name="Org. Biomol. Chem.">
        <title>New insights into ergot alkaloid biosynthesis in Claviceps purpurea: an agroclavine synthase EasG catalyses, via a non-enzymatic adduct with reduced glutathione, the conversion of chanoclavine-I aldehyde to agroclavine.</title>
        <authorList>
            <person name="Matuschek M."/>
            <person name="Wallwey C."/>
            <person name="Xie X."/>
            <person name="Li S.M."/>
        </authorList>
    </citation>
    <scope>FUNCTION</scope>
</reference>
<reference key="15">
    <citation type="journal article" date="2014" name="Chem. Biol.">
        <title>Cyclolization of D-lysergic acid alkaloid peptides.</title>
        <authorList>
            <person name="Havemann J."/>
            <person name="Vogel D."/>
            <person name="Loll B."/>
            <person name="Keller U."/>
        </authorList>
    </citation>
    <scope>FUNCTION</scope>
</reference>
<comment type="function">
    <text evidence="1 4 5 6 7 8 9 10 11 12 13 14 15 19 20">D-lysergyl-peptide-synthetase subunit 1; part of the gene cluster that mediates the biosynthesis of fungal ergot alkaloid (PubMed:10071219, PubMed:14700635, PubMed:14732265, PubMed:15904941, PubMed:17308187, PubMed:17720822). DmaW catalyzes the first step of ergot alkaloid biosynthesis by condensing dimethylallyl diphosphate (DMAP) and tryptophan to form 4-dimethylallyl-L-tryptophan (PubMed:14732265). The second step is catalyzed by the methyltransferase easF that methylates 4-dimethylallyl-L-tryptophan in the presence of S-adenosyl-L-methionine, resulting in the formation of 4-dimethylallyl-L-abrine (By similarity). The catalase easC and the FAD-dependent oxidoreductase easE then transform 4-dimethylallyl-L-abrine to chanoclavine-I which is further oxidized by easD in the presence of NAD(+), resulting in the formation of chanoclavine-I aldehyde (PubMed:20118373, PubMed:21409592). Agroclavine dehydrogenase easG then mediates the conversion of chanoclavine-I aldehyde to agroclavine via a non-enzymatic adduct reaction: the substrate is an iminium intermediate that is formed spontaneously from chanoclavine-I aldehyde in the presence of glutathione (PubMed:20735127, PubMed:21494745). The presence of easA is not required to complete this reaction (PubMed:21494745). Further conversion of agroclavine to paspalic acid is a two-step process involving oxidation of agroclavine to elymoclavine and of elymoclavine to paspalic acid, the second step being performed by the elymoclavine oxidase cloA (PubMed:16538694, PubMed:17720822). Paspalic acid is then further converted to D-lysergic acid (PubMed:15904941). Ergopeptines are assembled from D-lysergic acid and three different amino acids by the D-lysergyl-peptide-synthetases composed each of a monomudular and a trimodular nonribosomal peptide synthetase subunit (PubMed:14700635, PubMed:15904941). LpsB and lpsC encode the monomodular subunits responsible for D-lysergic acid activation and incorporation into the ergopeptine backbone (PubMed:14700635). LpsA1 and A2 subunits encode the trimodular nonribosomal peptide synthetase assembling the tripeptide portion of ergopeptines (PubMed:14700635). LpsA1 is responsible for formation of the major ergopeptine, ergotamine, and lpsA2 for alpha-ergocryptine, the minor ergopeptine of the total alkaloid mixture elaborated by C.purpurea (PubMed:17560817, PubMed:19139103). D-lysergyl-tripeptides are assembled by the nonribosomal peptide synthetases and released as N-(D-lysergyl-aminoacyl)-lactams (PubMed:24361048). Cyclolization of the D-lysergyl-tripeptides is performed by the Fe(2+)/2-ketoglutarate-dependent dioxygenase easH which introduces a hydroxyl group into N-(D-lysergyl-aminoacyl)-lactam at alpha-C of the aminoacyl residue followed by spontaneous condensation with the terminal lactam carbonyl group (PubMed:24361048).</text>
</comment>
<comment type="pathway">
    <text evidence="10">Alkaloid biosynthesis; ergot alkaloid biosynthesis.</text>
</comment>
<comment type="domain">
    <text evidence="4 5 10">NRP synthetases are composed of discrete domains (adenylation (A), thiolation (T) or peptidyl carrier protein (PCP) and condensation (C) domains) which when grouped together are referred to as a single module (PubMed:10071219). Each module is responsible for the recognition (via the A domain) and incorporation of a single amino acid into the growing peptide product (PubMed:10071219). Thus, an NRP synthetase is generally composed of one or more modules and can terminate in a thioesterase domain (TE) or reductase domain (R) that releases the newly synthesized peptide from the enzyme (PubMed:10071219). LpsA1 has a domain arrangement (A-T-C-A-T-C-A-T-Cyc) with 3 A and 3 peptidyl carrier (PCP/T) domains, 2 C-domains, and a terminal domain called the Cyc domain (PubMed:19139103). The Cyc domain has limited similarity to both C and Cy domains of NRPS but is most different in the so-called C3 and Cy3 motif of the latter domains, suggesting a special mechanism in acyl diketopiperazine formation, which is the final step of D-lysergyl peptide lactam synthesis (PubMed:19139103). LpsA1 misses an N-terminal C domain in the first module, leading to the conclusion that this C domain is located on the other subunit (lpsB or lpsC) containing the D-lysergic acid module (PubMed:19139103).</text>
</comment>
<comment type="disruption phenotype">
    <text evidence="9">Abolishes the production of ergotamine but is still able to produce ergocryptine (PubMed:17560817).</text>
</comment>
<comment type="similarity">
    <text evidence="18">Belongs to the NRP synthetase family.</text>
</comment>
<keyword id="KW-0436">Ligase</keyword>
<keyword id="KW-0596">Phosphopantetheine</keyword>
<keyword id="KW-0597">Phosphoprotein</keyword>
<keyword id="KW-0677">Repeat</keyword>
<keyword id="KW-0808">Transferase</keyword>
<organism>
    <name type="scientific">Claviceps purpurea</name>
    <name type="common">Ergot fungus</name>
    <name type="synonym">Sphacelia segetum</name>
    <dbReference type="NCBI Taxonomy" id="5111"/>
    <lineage>
        <taxon>Eukaryota</taxon>
        <taxon>Fungi</taxon>
        <taxon>Dikarya</taxon>
        <taxon>Ascomycota</taxon>
        <taxon>Pezizomycotina</taxon>
        <taxon>Sordariomycetes</taxon>
        <taxon>Hypocreomycetidae</taxon>
        <taxon>Hypocreales</taxon>
        <taxon>Clavicipitaceae</taxon>
        <taxon>Claviceps</taxon>
    </lineage>
</organism>
<accession>O94205</accession>
<sequence>MRCMLSYRDQFMSESQARHLAATMRVVLSSIASAPQQSLADVDMCSSLDYQTLSRWNLKSPVMMEVCVHDLVQQNCCSRPTCQAVASWDGCLTYDEMSILSSHLAQRLRAAGVKPGVFVALCLDRCKWAVIGILAVLKAGGAFCALDSSYPVSRLQDMCRDLEITIVLTVKTNIQHASPLADTVILLDDDLYSESALSSAQKCASRSSLSPHDPVYAVFTSGSTGKPKGIIMEHASFSACALSSMEPLHIGPQDRVLHFASYAFDLSLFEILAPLIAGATVVIPSEKARLENLPCAMTDLGATWAFLTPTVARLYRPTQMPTLKTLCLGGEAVNASDIKSWSSKNLISGYNPAECCPLGISGLLNDHMPRALGSTFPSQMAWIVDPEDHEKLLPVGAIGELAIEGPVVARGYVHDLKSSDSSTPFVVKTPTWLCRFRSNINRSNRIYLTGDLARQDCDDGSVHYLGRKDDQVKIHGQRVELAEIEQHIEQHFSSLATKAVVMLLRPISGRTVLTALVMPHQRLENGEKTSNSLLMELADINQDFRATLALAASKLRLALPSHMVPSVYLPIRHFPTTKGGKIDRGHLQSLLLSLPPEYLYGSEEATTHQGEEPKSDREKLLQGCFAQALDLPRTRIDLDSNFFQLGGDSLSAMKLLALALEEGISSIAYQDIFSHPTLREIVIVSTSATSREPLSSETVETPPFSLIKDPEMLIQIASEQCGSGVGKADIEDIYPCTHLQQSLMASTAHNPNAYVAILAFKLKSGVDRTRLERAWHIACSGHTILRTRLVQTDTGDCYQVVVKQPPHWTETNEVSDDGSTDSLLRTSFGLGRPLIQSHLSTDQLFVAMHHALYDGWSLPMLIGELDLAYRELSVRRLPCLKNYVKYTMDSADAAASFWQAELQDADPVHFPAPSSLDYKPQPCAAMTVSVPLVNSPRRNVTLATEIQFAWAMTVYTYTGCKDVIFGLISSGRAAPVAQIESILGPTFACTPLRVSIDPQGKLGEALDDLQYTIVEQSMFVHFGAQAIRQLGPNAAAACNFQTVLAVEADGPETGEEEGSWFTRYDFLSDVASFSSYALTLRCKLSTRGVEINAVYDKLMVDERQMGRILAQFEHILTQIHSNETVHDDIGGLDKLSVSDWRQLQAWNIDLPPAHPKGLGAHQAIQAKCQAQPDATAIDAWDGCVTYGELERRAEKLAGLVRSHVSKPDQVVVLYFSKSWLTVVAQLAVLKAGAAFITLEISQPVHYLQRVISALGPVLVLTSEDLFSAAEDLQENAVPVMAVDKDDLSDATARTSQASSSACTVECDLMYIIATSGTTGMPKIVMTDHQAFMTNASPLMNGLGITSDSRVFQFCGYSFDLLIVEHFLTLLAGGCICIPSLHNRNNRFAASIVELEANWVGSPSSVLQLLDPQTVPTVKTIMQAGERLQQGLVDRWASHVRLINAYGPAECSVGALARDTVRPDTDDVQNLGFATGSVCWIVNAETSEKLLPVPIGAEGELIIEGHTLSRGYLGDADKTNASFLRLPNWLRDFRADRGQSQGHRVYLTGDIVRQNSDGSMSFVRRKDAQVKIRGQRVELTDVEHQVERCFIGAHQVVTDIVQIPNSQSSILVALVLTKDAMTNHKQQESLLDQKSAGGLSILAPTSSFTANANAAETALQDRMPAYMVPDLFVPVSDLPREASGKIGRKAIKQYLASLTQQDWSRYSSTRKVPPSNATEHEISAIWARVLQIEPHTFGVHDSFFRLGGDSISGMQVAAACGVAGISVTVKDMFEYRTIRKLALARGETQQLTVGTTSTVSNASGIRQKKALHPFYPEGRLEVYMERMQSRLGQAIERIYPCSPIQQGILMSHARNPHHYDEVIQWKVAGDVSCDISRMQRAWREVVSRHGILRTLFLQVSEDSFLDQVVLKNYSPDISVCTNEEDVEPYRPFEDSVPMHHLLVFQRSADDVTVHLRIHHALVDGLSLHIIRRDLELAYQERLDELAQPPGYHEYISYLQEKRSRKSLQEYWSSYLQGATGSLFPAVQDEPASDGQYFGAVEIELGSIAKLTQFCEEHKLGVTVVLHVVWAVIVQRYAATDEVCFGYMTSGRHVPVTNVENVVGPLFNMLIGRVKLAYHLSVLSTMYAYQENFINSLDHQHQSLVETLHSIGSSAGDLFNTLITVVNDQPEDHVSQSALRLVGDSVQSRSEYPITLNILNHADKIKMQLSYHTSLLSGVSANTIAKAFRFVLQRTLEQPHELLRALPVLDEDQMNIVFAQNRCMPPQVDDFIHDTIHQQCLRCPDSPSVCAWDGNFTYRQLDDLSSALSEEIVRKGAGPEVTIPIVLEKTRWTPVAILAVLKSGSSFVLMDSTHPAARVGSIVQAIGPPVIIVSAQTRSKVATFSTDVVEVGDWLAREVPFEKQQGTRQTGLLKATNAAYLVFTSGSTGKPKGAIVEHASLSTAAKYMASRLHIDSASRVLQFSSHAWDIPVTEVLVTLRMGGCVCVPSEEERTGNLAKASERMKVNWALWTPTVARLFKPEEFPHLKTLVFAGEALSATDLETWCDRVRLVQGYGPAECSLISTVTDPLTRSDNPRCIGLPSGCVAWVVNRDNHELLAPPGATGELVLEGPIVGRGYLGDPGRAASAFISPPAWLMRLRGSGSSNRLYKTGDLVRQHVSSGLLTFVGRNDDQVKVRGQRVEPGEVEGQVAQVFPGSQVIVLVVKKSAGAVLAALVLQNGEDRSSAGETANLFPPPSLAFAALAKAAFSKLRETMPTYMIPSIMLPISYLPKAATGKADRNLLRDRVASLSDGEIEAYVAASVSHRPASTAMEAELQRLVGQVLQRPLHSISLDEDLFRLGMDSLTAMTLASAARRRGWEVSVPIIFQHSRVSDLARIVEQGQHGISSRAQLEEDRVVLNKRLVSLLPEICTKWDLREDQITHIAPTTYYQHMALASDHEAFFGLYFSKPVASEALKAAASRVVKLHSILRTAFVPLEDTYVQLTLCDFDLPSQEIQTNEAEVSAAMELFCRDAADKTAGFGVPVTKLILMLDRQGDCLSLLLRLQRAQFDGVSVMRIMADWRSALEHASCSWEPAPSLDYADFALARVAQNTPDVFGMWRDVLQGSSMTYLVPQQEYISMTDRGHAERLVTSSCDIPLPEPAPGYTMATVAKAAWAICLARETESEDLLFLQLVRNRHLALDGIDKMVGCSLNYVPVRVPLRRDWKISDLLHWLHQQHIRTMAGDTATGRCRG</sequence>
<protein>
    <recommendedName>
        <fullName evidence="16">D-lysergyl-peptide-synthetase subunit 1</fullName>
        <shortName evidence="16">LPS1</shortName>
        <ecNumber evidence="10">2.3.1.-</ecNumber>
    </recommendedName>
    <alternativeName>
        <fullName evidence="16">Ergot alkaloid synthesis protein ps1</fullName>
    </alternativeName>
    <alternativeName>
        <fullName evidence="16">Nonribosomal peptide synthetase 1</fullName>
    </alternativeName>
</protein>
<name>LPSA1_CLAPU</name>